<accession>P18424</accession>
<accession>O35849</accession>
<dbReference type="EC" id="2.3.1.43" evidence="4 5 6"/>
<dbReference type="EC" id="3.1.1.47" evidence="1"/>
<dbReference type="EMBL" id="X54096">
    <property type="protein sequence ID" value="CAA38030.1"/>
    <property type="molecule type" value="mRNA"/>
</dbReference>
<dbReference type="EMBL" id="U62803">
    <property type="protein sequence ID" value="AAB65771.1"/>
    <property type="molecule type" value="mRNA"/>
</dbReference>
<dbReference type="EMBL" id="AC121465">
    <property type="status" value="NOT_ANNOTATED_CDS"/>
    <property type="molecule type" value="Genomic_DNA"/>
</dbReference>
<dbReference type="EMBL" id="CH473972">
    <property type="protein sequence ID" value="EDL92424.1"/>
    <property type="molecule type" value="Genomic_DNA"/>
</dbReference>
<dbReference type="EMBL" id="BC091155">
    <property type="protein sequence ID" value="AAH91155.1"/>
    <property type="molecule type" value="mRNA"/>
</dbReference>
<dbReference type="PIR" id="S11214">
    <property type="entry name" value="XXRTN"/>
</dbReference>
<dbReference type="RefSeq" id="NP_058720.2">
    <property type="nucleotide sequence ID" value="NM_017024.3"/>
</dbReference>
<dbReference type="SMR" id="P18424"/>
<dbReference type="FunCoup" id="P18424">
    <property type="interactions" value="61"/>
</dbReference>
<dbReference type="IntAct" id="P18424">
    <property type="interactions" value="1"/>
</dbReference>
<dbReference type="STRING" id="10116.ENSRNOP00000026583"/>
<dbReference type="SwissLipids" id="SLP:000001728"/>
<dbReference type="ESTHER" id="ratno-lcat">
    <property type="family name" value="PC-sterol_acyltransferase"/>
</dbReference>
<dbReference type="GlyCosmos" id="P18424">
    <property type="glycosylation" value="5 sites, No reported glycans"/>
</dbReference>
<dbReference type="GlyGen" id="P18424">
    <property type="glycosylation" value="5 sites"/>
</dbReference>
<dbReference type="PhosphoSitePlus" id="P18424"/>
<dbReference type="PaxDb" id="10116-ENSRNOP00000026583"/>
<dbReference type="GeneID" id="24530"/>
<dbReference type="KEGG" id="rno:24530"/>
<dbReference type="UCSC" id="RGD:2993">
    <property type="organism name" value="rat"/>
</dbReference>
<dbReference type="AGR" id="RGD:2993"/>
<dbReference type="CTD" id="3931"/>
<dbReference type="RGD" id="2993">
    <property type="gene designation" value="Lcat"/>
</dbReference>
<dbReference type="VEuPathDB" id="HostDB:ENSRNOG00000019573"/>
<dbReference type="eggNOG" id="KOG2369">
    <property type="taxonomic scope" value="Eukaryota"/>
</dbReference>
<dbReference type="HOGENOM" id="CLU_037070_1_0_1"/>
<dbReference type="InParanoid" id="P18424"/>
<dbReference type="OrthoDB" id="16111at9989"/>
<dbReference type="PhylomeDB" id="P18424"/>
<dbReference type="TreeFam" id="TF313258"/>
<dbReference type="BRENDA" id="2.3.1.43">
    <property type="organism ID" value="5301"/>
</dbReference>
<dbReference type="Reactome" id="R-RNO-8964058">
    <property type="pathway name" value="HDL remodeling"/>
</dbReference>
<dbReference type="PRO" id="PR:P18424"/>
<dbReference type="Proteomes" id="UP000002494">
    <property type="component" value="Chromosome 19"/>
</dbReference>
<dbReference type="Proteomes" id="UP000234681">
    <property type="component" value="Chromosome 19"/>
</dbReference>
<dbReference type="Bgee" id="ENSRNOG00000019573">
    <property type="expression patterns" value="Expressed in liver and 20 other cell types or tissues"/>
</dbReference>
<dbReference type="GO" id="GO:0005615">
    <property type="term" value="C:extracellular space"/>
    <property type="evidence" value="ECO:0000250"/>
    <property type="project" value="UniProtKB"/>
</dbReference>
<dbReference type="GO" id="GO:0034364">
    <property type="term" value="C:high-density lipoprotein particle"/>
    <property type="evidence" value="ECO:0000266"/>
    <property type="project" value="RGD"/>
</dbReference>
<dbReference type="GO" id="GO:0003847">
    <property type="term" value="F:1-alkyl-2-acetylglycerophosphocholine esterase activity"/>
    <property type="evidence" value="ECO:0000266"/>
    <property type="project" value="RGD"/>
</dbReference>
<dbReference type="GO" id="GO:0034186">
    <property type="term" value="F:apolipoprotein A-I binding"/>
    <property type="evidence" value="ECO:0000266"/>
    <property type="project" value="RGD"/>
</dbReference>
<dbReference type="GO" id="GO:0004607">
    <property type="term" value="F:phosphatidylcholine-sterol O-acyltransferase activity"/>
    <property type="evidence" value="ECO:0000314"/>
    <property type="project" value="RGD"/>
</dbReference>
<dbReference type="GO" id="GO:0004623">
    <property type="term" value="F:phospholipase A2 activity"/>
    <property type="evidence" value="ECO:0000314"/>
    <property type="project" value="RGD"/>
</dbReference>
<dbReference type="GO" id="GO:0047179">
    <property type="term" value="F:platelet-activating factor acetyltransferase activity"/>
    <property type="evidence" value="ECO:0000266"/>
    <property type="project" value="RGD"/>
</dbReference>
<dbReference type="GO" id="GO:0004771">
    <property type="term" value="F:sterol ester esterase activity"/>
    <property type="evidence" value="ECO:0000266"/>
    <property type="project" value="RGD"/>
</dbReference>
<dbReference type="GO" id="GO:0046222">
    <property type="term" value="P:aflatoxin metabolic process"/>
    <property type="evidence" value="ECO:0000270"/>
    <property type="project" value="RGD"/>
</dbReference>
<dbReference type="GO" id="GO:0042632">
    <property type="term" value="P:cholesterol homeostasis"/>
    <property type="evidence" value="ECO:0000266"/>
    <property type="project" value="RGD"/>
</dbReference>
<dbReference type="GO" id="GO:0008203">
    <property type="term" value="P:cholesterol metabolic process"/>
    <property type="evidence" value="ECO:0000314"/>
    <property type="project" value="RGD"/>
</dbReference>
<dbReference type="GO" id="GO:0030301">
    <property type="term" value="P:cholesterol transport"/>
    <property type="evidence" value="ECO:0000266"/>
    <property type="project" value="RGD"/>
</dbReference>
<dbReference type="GO" id="GO:0034375">
    <property type="term" value="P:high-density lipoprotein particle remodeling"/>
    <property type="evidence" value="ECO:0000266"/>
    <property type="project" value="RGD"/>
</dbReference>
<dbReference type="GO" id="GO:0006629">
    <property type="term" value="P:lipid metabolic process"/>
    <property type="evidence" value="ECO:0000318"/>
    <property type="project" value="GO_Central"/>
</dbReference>
<dbReference type="GO" id="GO:0042158">
    <property type="term" value="P:lipoprotein biosynthetic process"/>
    <property type="evidence" value="ECO:0000266"/>
    <property type="project" value="RGD"/>
</dbReference>
<dbReference type="GO" id="GO:0042157">
    <property type="term" value="P:lipoprotein metabolic process"/>
    <property type="evidence" value="ECO:0000314"/>
    <property type="project" value="RGD"/>
</dbReference>
<dbReference type="GO" id="GO:0006656">
    <property type="term" value="P:phosphatidylcholine biosynthetic process"/>
    <property type="evidence" value="ECO:0000266"/>
    <property type="project" value="RGD"/>
</dbReference>
<dbReference type="GO" id="GO:0046470">
    <property type="term" value="P:phosphatidylcholine metabolic process"/>
    <property type="evidence" value="ECO:0000250"/>
    <property type="project" value="UniProtKB"/>
</dbReference>
<dbReference type="GO" id="GO:0006644">
    <property type="term" value="P:phospholipid metabolic process"/>
    <property type="evidence" value="ECO:0000266"/>
    <property type="project" value="RGD"/>
</dbReference>
<dbReference type="GO" id="GO:0090107">
    <property type="term" value="P:regulation of high-density lipoprotein particle assembly"/>
    <property type="evidence" value="ECO:0000266"/>
    <property type="project" value="RGD"/>
</dbReference>
<dbReference type="GO" id="GO:0046688">
    <property type="term" value="P:response to copper ion"/>
    <property type="evidence" value="ECO:0000314"/>
    <property type="project" value="RGD"/>
</dbReference>
<dbReference type="GO" id="GO:0051384">
    <property type="term" value="P:response to glucocorticoid"/>
    <property type="evidence" value="ECO:0000314"/>
    <property type="project" value="RGD"/>
</dbReference>
<dbReference type="GO" id="GO:0043691">
    <property type="term" value="P:reverse cholesterol transport"/>
    <property type="evidence" value="ECO:0000266"/>
    <property type="project" value="RGD"/>
</dbReference>
<dbReference type="GO" id="GO:0034372">
    <property type="term" value="P:very-low-density lipoprotein particle remodeling"/>
    <property type="evidence" value="ECO:0000266"/>
    <property type="project" value="RGD"/>
</dbReference>
<dbReference type="FunFam" id="3.40.50.1820:FF:000090">
    <property type="entry name" value="Phosphatidylcholine-sterol acyltransferase"/>
    <property type="match status" value="1"/>
</dbReference>
<dbReference type="FunFam" id="3.40.50.1820:FF:000183">
    <property type="entry name" value="Phosphatidylcholine-sterol acyltransferase"/>
    <property type="match status" value="1"/>
</dbReference>
<dbReference type="Gene3D" id="3.40.50.1820">
    <property type="entry name" value="alpha/beta hydrolase"/>
    <property type="match status" value="3"/>
</dbReference>
<dbReference type="InterPro" id="IPR029058">
    <property type="entry name" value="AB_hydrolase_fold"/>
</dbReference>
<dbReference type="InterPro" id="IPR003386">
    <property type="entry name" value="LACT/PDAT_acylTrfase"/>
</dbReference>
<dbReference type="PANTHER" id="PTHR11440">
    <property type="entry name" value="LECITHIN-CHOLESTEROL ACYLTRANSFERASE-RELATED"/>
    <property type="match status" value="1"/>
</dbReference>
<dbReference type="Pfam" id="PF02450">
    <property type="entry name" value="LCAT"/>
    <property type="match status" value="1"/>
</dbReference>
<dbReference type="SUPFAM" id="SSF53474">
    <property type="entry name" value="alpha/beta-Hydrolases"/>
    <property type="match status" value="1"/>
</dbReference>
<dbReference type="PROSITE" id="PS00120">
    <property type="entry name" value="LIPASE_SER"/>
    <property type="match status" value="1"/>
</dbReference>
<reference key="1">
    <citation type="journal article" date="1990" name="Nucleic Acids Res.">
        <title>Nucleotide sequence of the cDNA for lecithin-cholesterol acyl transferase (LCAT) from the rat.</title>
        <authorList>
            <person name="Meroni G."/>
            <person name="Malgaretti N."/>
            <person name="Magnaghi P."/>
            <person name="Taramelli R."/>
        </authorList>
    </citation>
    <scope>NUCLEOTIDE SEQUENCE [MRNA]</scope>
</reference>
<reference key="2">
    <citation type="journal article" date="1997" name="Biochim. Biophys. Acta">
        <title>Cloning and in vitro expression of rat lecithin:cholesterol acyltransferase.</title>
        <authorList>
            <person name="Wang J."/>
            <person name="Gebre A.K."/>
            <person name="Anderson R.A."/>
            <person name="Parks J.S."/>
        </authorList>
    </citation>
    <scope>NUCLEOTIDE SEQUENCE [MRNA]</scope>
    <scope>CATALYTIC ACTIVITY</scope>
    <scope>SUBCELLULAR LOCATION</scope>
    <source>
        <strain>Sprague-Dawley</strain>
        <strain>Wistar</strain>
        <tissue>Liver</tissue>
    </source>
</reference>
<reference key="3">
    <citation type="journal article" date="2004" name="Nature">
        <title>Genome sequence of the Brown Norway rat yields insights into mammalian evolution.</title>
        <authorList>
            <person name="Gibbs R.A."/>
            <person name="Weinstock G.M."/>
            <person name="Metzker M.L."/>
            <person name="Muzny D.M."/>
            <person name="Sodergren E.J."/>
            <person name="Scherer S."/>
            <person name="Scott G."/>
            <person name="Steffen D."/>
            <person name="Worley K.C."/>
            <person name="Burch P.E."/>
            <person name="Okwuonu G."/>
            <person name="Hines S."/>
            <person name="Lewis L."/>
            <person name="Deramo C."/>
            <person name="Delgado O."/>
            <person name="Dugan-Rocha S."/>
            <person name="Miner G."/>
            <person name="Morgan M."/>
            <person name="Hawes A."/>
            <person name="Gill R."/>
            <person name="Holt R.A."/>
            <person name="Adams M.D."/>
            <person name="Amanatides P.G."/>
            <person name="Baden-Tillson H."/>
            <person name="Barnstead M."/>
            <person name="Chin S."/>
            <person name="Evans C.A."/>
            <person name="Ferriera S."/>
            <person name="Fosler C."/>
            <person name="Glodek A."/>
            <person name="Gu Z."/>
            <person name="Jennings D."/>
            <person name="Kraft C.L."/>
            <person name="Nguyen T."/>
            <person name="Pfannkoch C.M."/>
            <person name="Sitter C."/>
            <person name="Sutton G.G."/>
            <person name="Venter J.C."/>
            <person name="Woodage T."/>
            <person name="Smith D."/>
            <person name="Lee H.-M."/>
            <person name="Gustafson E."/>
            <person name="Cahill P."/>
            <person name="Kana A."/>
            <person name="Doucette-Stamm L."/>
            <person name="Weinstock K."/>
            <person name="Fechtel K."/>
            <person name="Weiss R.B."/>
            <person name="Dunn D.M."/>
            <person name="Green E.D."/>
            <person name="Blakesley R.W."/>
            <person name="Bouffard G.G."/>
            <person name="De Jong P.J."/>
            <person name="Osoegawa K."/>
            <person name="Zhu B."/>
            <person name="Marra M."/>
            <person name="Schein J."/>
            <person name="Bosdet I."/>
            <person name="Fjell C."/>
            <person name="Jones S."/>
            <person name="Krzywinski M."/>
            <person name="Mathewson C."/>
            <person name="Siddiqui A."/>
            <person name="Wye N."/>
            <person name="McPherson J."/>
            <person name="Zhao S."/>
            <person name="Fraser C.M."/>
            <person name="Shetty J."/>
            <person name="Shatsman S."/>
            <person name="Geer K."/>
            <person name="Chen Y."/>
            <person name="Abramzon S."/>
            <person name="Nierman W.C."/>
            <person name="Havlak P.H."/>
            <person name="Chen R."/>
            <person name="Durbin K.J."/>
            <person name="Egan A."/>
            <person name="Ren Y."/>
            <person name="Song X.-Z."/>
            <person name="Li B."/>
            <person name="Liu Y."/>
            <person name="Qin X."/>
            <person name="Cawley S."/>
            <person name="Cooney A.J."/>
            <person name="D'Souza L.M."/>
            <person name="Martin K."/>
            <person name="Wu J.Q."/>
            <person name="Gonzalez-Garay M.L."/>
            <person name="Jackson A.R."/>
            <person name="Kalafus K.J."/>
            <person name="McLeod M.P."/>
            <person name="Milosavljevic A."/>
            <person name="Virk D."/>
            <person name="Volkov A."/>
            <person name="Wheeler D.A."/>
            <person name="Zhang Z."/>
            <person name="Bailey J.A."/>
            <person name="Eichler E.E."/>
            <person name="Tuzun E."/>
            <person name="Birney E."/>
            <person name="Mongin E."/>
            <person name="Ureta-Vidal A."/>
            <person name="Woodwark C."/>
            <person name="Zdobnov E."/>
            <person name="Bork P."/>
            <person name="Suyama M."/>
            <person name="Torrents D."/>
            <person name="Alexandersson M."/>
            <person name="Trask B.J."/>
            <person name="Young J.M."/>
            <person name="Huang H."/>
            <person name="Wang H."/>
            <person name="Xing H."/>
            <person name="Daniels S."/>
            <person name="Gietzen D."/>
            <person name="Schmidt J."/>
            <person name="Stevens K."/>
            <person name="Vitt U."/>
            <person name="Wingrove J."/>
            <person name="Camara F."/>
            <person name="Mar Alba M."/>
            <person name="Abril J.F."/>
            <person name="Guigo R."/>
            <person name="Smit A."/>
            <person name="Dubchak I."/>
            <person name="Rubin E.M."/>
            <person name="Couronne O."/>
            <person name="Poliakov A."/>
            <person name="Huebner N."/>
            <person name="Ganten D."/>
            <person name="Goesele C."/>
            <person name="Hummel O."/>
            <person name="Kreitler T."/>
            <person name="Lee Y.-A."/>
            <person name="Monti J."/>
            <person name="Schulz H."/>
            <person name="Zimdahl H."/>
            <person name="Himmelbauer H."/>
            <person name="Lehrach H."/>
            <person name="Jacob H.J."/>
            <person name="Bromberg S."/>
            <person name="Gullings-Handley J."/>
            <person name="Jensen-Seaman M.I."/>
            <person name="Kwitek A.E."/>
            <person name="Lazar J."/>
            <person name="Pasko D."/>
            <person name="Tonellato P.J."/>
            <person name="Twigger S."/>
            <person name="Ponting C.P."/>
            <person name="Duarte J.M."/>
            <person name="Rice S."/>
            <person name="Goodstadt L."/>
            <person name="Beatson S.A."/>
            <person name="Emes R.D."/>
            <person name="Winter E.E."/>
            <person name="Webber C."/>
            <person name="Brandt P."/>
            <person name="Nyakatura G."/>
            <person name="Adetobi M."/>
            <person name="Chiaromonte F."/>
            <person name="Elnitski L."/>
            <person name="Eswara P."/>
            <person name="Hardison R.C."/>
            <person name="Hou M."/>
            <person name="Kolbe D."/>
            <person name="Makova K."/>
            <person name="Miller W."/>
            <person name="Nekrutenko A."/>
            <person name="Riemer C."/>
            <person name="Schwartz S."/>
            <person name="Taylor J."/>
            <person name="Yang S."/>
            <person name="Zhang Y."/>
            <person name="Lindpaintner K."/>
            <person name="Andrews T.D."/>
            <person name="Caccamo M."/>
            <person name="Clamp M."/>
            <person name="Clarke L."/>
            <person name="Curwen V."/>
            <person name="Durbin R.M."/>
            <person name="Eyras E."/>
            <person name="Searle S.M."/>
            <person name="Cooper G.M."/>
            <person name="Batzoglou S."/>
            <person name="Brudno M."/>
            <person name="Sidow A."/>
            <person name="Stone E.A."/>
            <person name="Payseur B.A."/>
            <person name="Bourque G."/>
            <person name="Lopez-Otin C."/>
            <person name="Puente X.S."/>
            <person name="Chakrabarti K."/>
            <person name="Chatterji S."/>
            <person name="Dewey C."/>
            <person name="Pachter L."/>
            <person name="Bray N."/>
            <person name="Yap V.B."/>
            <person name="Caspi A."/>
            <person name="Tesler G."/>
            <person name="Pevzner P.A."/>
            <person name="Haussler D."/>
            <person name="Roskin K.M."/>
            <person name="Baertsch R."/>
            <person name="Clawson H."/>
            <person name="Furey T.S."/>
            <person name="Hinrichs A.S."/>
            <person name="Karolchik D."/>
            <person name="Kent W.J."/>
            <person name="Rosenbloom K.R."/>
            <person name="Trumbower H."/>
            <person name="Weirauch M."/>
            <person name="Cooper D.N."/>
            <person name="Stenson P.D."/>
            <person name="Ma B."/>
            <person name="Brent M."/>
            <person name="Arumugam M."/>
            <person name="Shteynberg D."/>
            <person name="Copley R.R."/>
            <person name="Taylor M.S."/>
            <person name="Riethman H."/>
            <person name="Mudunuri U."/>
            <person name="Peterson J."/>
            <person name="Guyer M."/>
            <person name="Felsenfeld A."/>
            <person name="Old S."/>
            <person name="Mockrin S."/>
            <person name="Collins F.S."/>
        </authorList>
    </citation>
    <scope>NUCLEOTIDE SEQUENCE [LARGE SCALE GENOMIC DNA]</scope>
    <source>
        <strain>Brown Norway</strain>
    </source>
</reference>
<reference key="4">
    <citation type="submission" date="2005-09" db="EMBL/GenBank/DDBJ databases">
        <authorList>
            <person name="Mural R.J."/>
            <person name="Adams M.D."/>
            <person name="Myers E.W."/>
            <person name="Smith H.O."/>
            <person name="Venter J.C."/>
        </authorList>
    </citation>
    <scope>NUCLEOTIDE SEQUENCE [LARGE SCALE GENOMIC DNA]</scope>
    <source>
        <strain>Brown Norway</strain>
    </source>
</reference>
<reference key="5">
    <citation type="journal article" date="2004" name="Genome Res.">
        <title>The status, quality, and expansion of the NIH full-length cDNA project: the Mammalian Gene Collection (MGC).</title>
        <authorList>
            <consortium name="The MGC Project Team"/>
        </authorList>
    </citation>
    <scope>NUCLEOTIDE SEQUENCE [LARGE SCALE MRNA]</scope>
    <source>
        <tissue>Liver</tissue>
    </source>
</reference>
<reference key="6">
    <citation type="journal article" date="1996" name="J. Lipid Res.">
        <title>Comparative studies on the substrate specificity of lecithin:cholesterol acyltransferase towards the molecular species of phosphatidylcholine in the plasma of 14 vertebrates.</title>
        <authorList>
            <person name="Subbaiah P.V."/>
            <person name="Liu M."/>
        </authorList>
    </citation>
    <scope>CATALYTIC ACTIVITY</scope>
    <scope>FUNCTION</scope>
    <scope>SUBSTRATE SPECIFICITY</scope>
    <scope>SUBCELLULAR LOCATION</scope>
    <scope>TISSUE SPECIFICITY</scope>
</reference>
<reference key="7">
    <citation type="journal article" date="2003" name="Biochemistry">
        <title>Negative charge at amino acid 149 is the molecular determinant for substrate specificity of lecithin: cholesterol acyltransferase for phosphatidylcholine containing 20-carbon sn-2 fatty acyl chains.</title>
        <authorList>
            <person name="Zhao Y."/>
            <person name="Wang J."/>
            <person name="Gebre A.K."/>
            <person name="Chisholm J.W."/>
            <person name="Parks J.S."/>
        </authorList>
    </citation>
    <scope>CATALYTIC ACTIVITY</scope>
    <scope>FUNCTION</scope>
    <scope>SUBSTRATE SPECIFICITY</scope>
    <scope>SUBCELLULAR LOCATION</scope>
    <scope>MUTAGENESIS OF ALA-173</scope>
</reference>
<evidence type="ECO:0000250" key="1">
    <source>
        <dbReference type="UniProtKB" id="P04180"/>
    </source>
</evidence>
<evidence type="ECO:0000255" key="2"/>
<evidence type="ECO:0000255" key="3">
    <source>
        <dbReference type="PROSITE-ProRule" id="PRU10037"/>
    </source>
</evidence>
<evidence type="ECO:0000269" key="4">
    <source>
    </source>
</evidence>
<evidence type="ECO:0000269" key="5">
    <source>
    </source>
</evidence>
<evidence type="ECO:0000269" key="6">
    <source>
    </source>
</evidence>
<evidence type="ECO:0000303" key="7">
    <source>
    </source>
</evidence>
<evidence type="ECO:0000305" key="8"/>
<evidence type="ECO:0000305" key="9">
    <source>
    </source>
</evidence>
<name>LCAT_RAT</name>
<organism>
    <name type="scientific">Rattus norvegicus</name>
    <name type="common">Rat</name>
    <dbReference type="NCBI Taxonomy" id="10116"/>
    <lineage>
        <taxon>Eukaryota</taxon>
        <taxon>Metazoa</taxon>
        <taxon>Chordata</taxon>
        <taxon>Craniata</taxon>
        <taxon>Vertebrata</taxon>
        <taxon>Euteleostomi</taxon>
        <taxon>Mammalia</taxon>
        <taxon>Eutheria</taxon>
        <taxon>Euarchontoglires</taxon>
        <taxon>Glires</taxon>
        <taxon>Rodentia</taxon>
        <taxon>Myomorpha</taxon>
        <taxon>Muroidea</taxon>
        <taxon>Muridae</taxon>
        <taxon>Murinae</taxon>
        <taxon>Rattus</taxon>
    </lineage>
</organism>
<keyword id="KW-0012">Acyltransferase</keyword>
<keyword id="KW-0153">Cholesterol metabolism</keyword>
<keyword id="KW-1015">Disulfide bond</keyword>
<keyword id="KW-0325">Glycoprotein</keyword>
<keyword id="KW-0378">Hydrolase</keyword>
<keyword id="KW-0443">Lipid metabolism</keyword>
<keyword id="KW-1185">Reference proteome</keyword>
<keyword id="KW-0964">Secreted</keyword>
<keyword id="KW-0732">Signal</keyword>
<keyword id="KW-0753">Steroid metabolism</keyword>
<keyword id="KW-1207">Sterol metabolism</keyword>
<keyword id="KW-0808">Transferase</keyword>
<comment type="function">
    <text evidence="1 4 5">Central enzyme in the extracellular metabolism of plasma lipoproteins. Synthesized mainly in the liver and secreted into plasma where it converts cholesterol and phosphatidylcholines (lecithins) to cholesteryl esters and lysophosphatidylcholines on the surface of high and low density lipoproteins (HDLs and LDLs). The cholesterol ester is then transported back to the liver. Also produced in the brain by primary astrocytes, and esterifies free cholesterol on nascent APOE-containing lipoproteins secreted from glia and influences cerebral spinal fluid (CSF) APOE- and APOA1 levels. Together with APOE and the cholesterol transporter ABCA1, plays a key role in the maturation of glial-derived, nascent lipoproteins. Required for remodeling high-density lipoprotein particles into their spherical forms (By similarity). Has a preference for plasma 16:0-18:2 or 18:O-18:2 phosphatidylcholines (PubMed:14636062, PubMed:8820107). Catalyzes the hydrolysis of 1-O-alkyl-2-acetyl-sn-glycero-3-phosphocholine (platelet-activating factor or PAF) to 1-O-alkyl-sn-glycero-3-phosphocholine (lyso-PAF) (By similarity). Also catalyzes the transfer of the acetate group from PAF to 1-hexadecanoyl-sn-glycero-3-phosphocholine forming lyso-PAF (By similarity). Catalyzes the esterification of (24S)-hydroxycholesterol (24(S)OH-C), also known as cerebrosterol to produce 24(S)OH-C monoesters (By similarity).</text>
</comment>
<comment type="catalytic activity">
    <reaction evidence="3 4 5 6">
        <text>a sterol + a 1,2-diacyl-sn-glycero-3-phosphocholine = a sterol ester + a 1-acyl-sn-glycero-3-phosphocholine</text>
        <dbReference type="Rhea" id="RHEA:21204"/>
        <dbReference type="ChEBI" id="CHEBI:15889"/>
        <dbReference type="ChEBI" id="CHEBI:35915"/>
        <dbReference type="ChEBI" id="CHEBI:57643"/>
        <dbReference type="ChEBI" id="CHEBI:58168"/>
        <dbReference type="EC" id="2.3.1.43"/>
    </reaction>
</comment>
<comment type="catalytic activity">
    <reaction evidence="1">
        <text>a 1-O-alkyl-2-acetyl-sn-glycero-3-phosphocholine + H2O = a 1-O-alkyl-sn-glycero-3-phosphocholine + acetate + H(+)</text>
        <dbReference type="Rhea" id="RHEA:17777"/>
        <dbReference type="ChEBI" id="CHEBI:15377"/>
        <dbReference type="ChEBI" id="CHEBI:15378"/>
        <dbReference type="ChEBI" id="CHEBI:30089"/>
        <dbReference type="ChEBI" id="CHEBI:30909"/>
        <dbReference type="ChEBI" id="CHEBI:36707"/>
        <dbReference type="EC" id="3.1.1.47"/>
    </reaction>
    <physiologicalReaction direction="left-to-right" evidence="1">
        <dbReference type="Rhea" id="RHEA:17778"/>
    </physiologicalReaction>
</comment>
<comment type="catalytic activity">
    <reaction evidence="4">
        <text>1-hexadecanoyl-2-(9Z,12Z-octadecadienoyl)-sn-glycero-3-phosphocholine + H2O = (9Z,12Z)-octadecadienoate + 1-hexadecanoyl-sn-glycero-3-phosphocholine + H(+)</text>
        <dbReference type="Rhea" id="RHEA:40811"/>
        <dbReference type="ChEBI" id="CHEBI:15377"/>
        <dbReference type="ChEBI" id="CHEBI:15378"/>
        <dbReference type="ChEBI" id="CHEBI:30245"/>
        <dbReference type="ChEBI" id="CHEBI:72998"/>
        <dbReference type="ChEBI" id="CHEBI:73002"/>
    </reaction>
    <physiologicalReaction direction="left-to-right" evidence="9">
        <dbReference type="Rhea" id="RHEA:40812"/>
    </physiologicalReaction>
</comment>
<comment type="catalytic activity">
    <reaction evidence="4">
        <text>1-hexadecanoyl-2-(5Z,8Z,11Z,14Z-eicosatetraenoyl)-sn-glycero-3-phosphocholine + H2O = 1-hexadecanoyl-sn-glycero-3-phosphocholine + (5Z,8Z,11Z,14Z)-eicosatetraenoate + H(+)</text>
        <dbReference type="Rhea" id="RHEA:40427"/>
        <dbReference type="ChEBI" id="CHEBI:15377"/>
        <dbReference type="ChEBI" id="CHEBI:15378"/>
        <dbReference type="ChEBI" id="CHEBI:32395"/>
        <dbReference type="ChEBI" id="CHEBI:72998"/>
        <dbReference type="ChEBI" id="CHEBI:73003"/>
    </reaction>
    <physiologicalReaction direction="left-to-right" evidence="9">
        <dbReference type="Rhea" id="RHEA:40428"/>
    </physiologicalReaction>
</comment>
<comment type="catalytic activity">
    <reaction evidence="4">
        <text>1-hexadecanoyl-2-(5Z,8Z,11Z,14Z-eicosatetraenoyl)-sn-glycero-3-phosphocholine + cholesterol = cholesteryl (5Z,8Z,11Z,14Z)-eicosatetraenoate + 1-hexadecanoyl-sn-glycero-3-phosphocholine</text>
        <dbReference type="Rhea" id="RHEA:53448"/>
        <dbReference type="ChEBI" id="CHEBI:16113"/>
        <dbReference type="ChEBI" id="CHEBI:72998"/>
        <dbReference type="ChEBI" id="CHEBI:73003"/>
        <dbReference type="ChEBI" id="CHEBI:82751"/>
    </reaction>
    <physiologicalReaction direction="left-to-right" evidence="9">
        <dbReference type="Rhea" id="RHEA:53449"/>
    </physiologicalReaction>
</comment>
<comment type="catalytic activity">
    <reaction evidence="4">
        <text>1-hexadecanoyl-2-(9Z-octadecenoyl)-sn-glycero-3-phosphocholine + cholesterol = cholesteryl (9Z-octadecenoate) + 1-hexadecanoyl-sn-glycero-3-phosphocholine</text>
        <dbReference type="Rhea" id="RHEA:53456"/>
        <dbReference type="ChEBI" id="CHEBI:16113"/>
        <dbReference type="ChEBI" id="CHEBI:46898"/>
        <dbReference type="ChEBI" id="CHEBI:72998"/>
        <dbReference type="ChEBI" id="CHEBI:73001"/>
    </reaction>
    <physiologicalReaction direction="left-to-right" evidence="9">
        <dbReference type="Rhea" id="RHEA:53457"/>
    </physiologicalReaction>
</comment>
<comment type="catalytic activity">
    <reaction evidence="1">
        <text>a 1-hexadecanoyl-2-acyl-sn-glycero-3-phosphocholine + (24S)-hydroxycholesterol = (24S)-24-hydroxycholesterol ester + 1-hexadecanoyl-sn-glycero-3-phosphocholine</text>
        <dbReference type="Rhea" id="RHEA:43216"/>
        <dbReference type="ChEBI" id="CHEBI:34310"/>
        <dbReference type="ChEBI" id="CHEBI:72998"/>
        <dbReference type="ChEBI" id="CHEBI:77369"/>
        <dbReference type="ChEBI" id="CHEBI:82869"/>
    </reaction>
    <physiologicalReaction direction="left-to-right" evidence="1">
        <dbReference type="Rhea" id="RHEA:43217"/>
    </physiologicalReaction>
</comment>
<comment type="catalytic activity">
    <reaction evidence="1">
        <text>(24S)-hydroxycholesterol + 1-hexadecanoyl-2-(9Z,12Z-octadecadienoyl)-sn-glycero-3-phosphocholine = (24S)-hydroxycholesterol 3-linoleoate + 1-hexadecanoyl-sn-glycero-3-phosphocholine</text>
        <dbReference type="Rhea" id="RHEA:43224"/>
        <dbReference type="ChEBI" id="CHEBI:34310"/>
        <dbReference type="ChEBI" id="CHEBI:72998"/>
        <dbReference type="ChEBI" id="CHEBI:73002"/>
        <dbReference type="ChEBI" id="CHEBI:82875"/>
    </reaction>
    <physiologicalReaction direction="left-to-right" evidence="1">
        <dbReference type="Rhea" id="RHEA:43225"/>
    </physiologicalReaction>
</comment>
<comment type="catalytic activity">
    <reaction evidence="1">
        <text>1-hexadecanoyl-2-(8Z,11Z,14Z-eicosatrienoyl)-sn-glycero-3-phosphocholine + cholesterol = cholesteryl (8Z,11Z,14Z)-eicosatrienoate + 1-hexadecanoyl-sn-glycero-3-phosphocholine</text>
        <dbReference type="Rhea" id="RHEA:53464"/>
        <dbReference type="ChEBI" id="CHEBI:16113"/>
        <dbReference type="ChEBI" id="CHEBI:72998"/>
        <dbReference type="ChEBI" id="CHEBI:84346"/>
        <dbReference type="ChEBI" id="CHEBI:86121"/>
    </reaction>
    <physiologicalReaction direction="left-to-right" evidence="1">
        <dbReference type="Rhea" id="RHEA:53465"/>
    </physiologicalReaction>
</comment>
<comment type="catalytic activity">
    <reaction evidence="1">
        <text>1-hexadecanoyl-2-(5Z,8Z,11Z-eicosatrienoyl)-sn-glycero-3-phosphocholine + cholesterol = cholesteryl (5Z,8Z,11Z)-eicosatrienoate + 1-hexadecanoyl-sn-glycero-3-phosphocholine</text>
        <dbReference type="Rhea" id="RHEA:53460"/>
        <dbReference type="ChEBI" id="CHEBI:16113"/>
        <dbReference type="ChEBI" id="CHEBI:72998"/>
        <dbReference type="ChEBI" id="CHEBI:86119"/>
        <dbReference type="ChEBI" id="CHEBI:88752"/>
    </reaction>
    <physiologicalReaction direction="left-to-right" evidence="1">
        <dbReference type="Rhea" id="RHEA:53461"/>
    </physiologicalReaction>
</comment>
<comment type="catalytic activity">
    <reaction evidence="1">
        <text>1-hexadecanoyl-2-(5Z,8Z,11Z,14Z,17Z-eicosapentaenoyl)-sn-glycero-3-phosphocholine + cholesterol = (5Z,8Z,11Z,14Z,17Z-eicosapentaenoyl)-cholesterol + 1-hexadecanoyl-sn-glycero-3-phosphocholine</text>
        <dbReference type="Rhea" id="RHEA:53468"/>
        <dbReference type="ChEBI" id="CHEBI:16113"/>
        <dbReference type="ChEBI" id="CHEBI:72998"/>
        <dbReference type="ChEBI" id="CHEBI:84969"/>
        <dbReference type="ChEBI" id="CHEBI:86137"/>
    </reaction>
    <physiologicalReaction direction="left-to-right" evidence="1">
        <dbReference type="Rhea" id="RHEA:53469"/>
    </physiologicalReaction>
</comment>
<comment type="catalytic activity">
    <reaction evidence="1">
        <text>1-hexadecanoyl-2-(9Z,12Z-octadecadienoyl)-sn-glycero-3-phosphocholine + cholesterol = cholesteryl (9Z,12Z)-octadecadienoate + 1-hexadecanoyl-sn-glycero-3-phosphocholine</text>
        <dbReference type="Rhea" id="RHEA:53472"/>
        <dbReference type="ChEBI" id="CHEBI:16113"/>
        <dbReference type="ChEBI" id="CHEBI:41509"/>
        <dbReference type="ChEBI" id="CHEBI:72998"/>
        <dbReference type="ChEBI" id="CHEBI:73002"/>
    </reaction>
    <physiologicalReaction direction="left-to-right" evidence="1">
        <dbReference type="Rhea" id="RHEA:53473"/>
    </physiologicalReaction>
</comment>
<comment type="catalytic activity">
    <reaction evidence="1">
        <text>1-hexadecanoyl-2-(6Z,9Z,12Z-octadecatrienoyl)-sn-glycero-3-phosphocholine + cholesterol = (6Z,9Z,12Z-octadecatrienoyl)-cholesterol + 1-hexadecanoyl-sn-glycero-3-phosphocholine</text>
        <dbReference type="Rhea" id="RHEA:53476"/>
        <dbReference type="ChEBI" id="CHEBI:16113"/>
        <dbReference type="ChEBI" id="CHEBI:72998"/>
        <dbReference type="ChEBI" id="CHEBI:84786"/>
        <dbReference type="ChEBI" id="CHEBI:88756"/>
    </reaction>
    <physiologicalReaction direction="left-to-right" evidence="1">
        <dbReference type="Rhea" id="RHEA:53477"/>
    </physiologicalReaction>
</comment>
<comment type="catalytic activity">
    <reaction evidence="1">
        <text>1-hexadecanoyl-2-(11Z,14Z,17Z-eicosatrienoyl)-sn-glycero-3-phosphocholine + cholesterol = (11Z,14Z,17Z-eicosatrienoyl)-cholesterol + 1-hexadecanoyl-sn-glycero-3-phosphocholine</text>
        <dbReference type="Rhea" id="RHEA:53516"/>
        <dbReference type="ChEBI" id="CHEBI:16113"/>
        <dbReference type="ChEBI" id="CHEBI:72998"/>
        <dbReference type="ChEBI" id="CHEBI:137411"/>
        <dbReference type="ChEBI" id="CHEBI:137412"/>
    </reaction>
    <physiologicalReaction direction="left-to-right" evidence="1">
        <dbReference type="Rhea" id="RHEA:53517"/>
    </physiologicalReaction>
</comment>
<comment type="catalytic activity">
    <reaction evidence="1">
        <text>1-hexadecanoyl-2-(9Z,12Z,15Z-octadecatrienoyl)-sn-glycero-3-phosphocholine + cholesterol = (9Z,12Z,15Z-octadecatrienoyl)-cholesterol + 1-hexadecanoyl-sn-glycero-3-phosphocholine</text>
        <dbReference type="Rhea" id="RHEA:53520"/>
        <dbReference type="ChEBI" id="CHEBI:16113"/>
        <dbReference type="ChEBI" id="CHEBI:72998"/>
        <dbReference type="ChEBI" id="CHEBI:84341"/>
        <dbReference type="ChEBI" id="CHEBI:84789"/>
    </reaction>
    <physiologicalReaction direction="left-to-right" evidence="1">
        <dbReference type="Rhea" id="RHEA:53521"/>
    </physiologicalReaction>
</comment>
<comment type="catalytic activity">
    <reaction evidence="1">
        <text>a 1-O-alkyl-2-acetyl-sn-glycero-3-phosphocholine + 1-hexadecanoyl-sn-glycero-3-phosphocholine = 1-hexadecanoyl-2-acetyl-sn-glycero-3-phosphocholine + a 1-O-alkyl-sn-glycero-3-phosphocholine</text>
        <dbReference type="Rhea" id="RHEA:53636"/>
        <dbReference type="ChEBI" id="CHEBI:30909"/>
        <dbReference type="ChEBI" id="CHEBI:36707"/>
        <dbReference type="ChEBI" id="CHEBI:72998"/>
        <dbReference type="ChEBI" id="CHEBI:75219"/>
    </reaction>
    <physiologicalReaction direction="left-to-right" evidence="1">
        <dbReference type="Rhea" id="RHEA:53637"/>
    </physiologicalReaction>
</comment>
<comment type="subcellular location">
    <subcellularLocation>
        <location evidence="4 5 6">Secreted</location>
    </subcellularLocation>
    <text evidence="1 5">Secreted into blood plasma (PubMed:8820107). Produced in astrocytes and secreted into cerebral spinal fluid (CSF) (By similarity).</text>
</comment>
<comment type="tissue specificity">
    <text evidence="5">Detected in blood plasma (at protein level) (PubMed:8820107).</text>
</comment>
<comment type="similarity">
    <text evidence="8">Belongs to the AB hydrolase superfamily. Lipase family.</text>
</comment>
<sequence>MGLPGSPWQWVLLLLGLLLPPATSFWLLNVLFPPHTTPKAELSNHTRPVILVPGCMGNRLEAKLDKPNVVNWLCYRKTEDFFTIWLDFNMFLPLGVDCWIDNTRVVYNRSSGHMSNAPGVQIRVPGFGKTYSVEYLDDNKLAGYLHTLVQNLVNNGYVRDETVRAAPYDWRLAPRQQDEYYQKLAGLVEEMYAAYGKPVFLIGHSLGCLHVLHFLLRQPQSWKDHFIDGFISLGAPWGGSIKPMRILASGDNQGIPIMSNIKLREEQRITTTSPWMFPAHHVWPEDHVFISTPNFNYTGQDFERFFADLHFEEGWHMFLQSRDLLAGLPAPGVEVYCLYGVGMPTAHTYIYDHNFPYKDPVAALYEDGDDTVATRSTELCGQWQGRQSQAVHLLPMNGTDHLNMVFSNKTLEHINAILLGAYRHGTPKSPTASLGPPTKE</sequence>
<proteinExistence type="evidence at protein level"/>
<gene>
    <name type="primary">Lcat</name>
</gene>
<feature type="signal peptide" evidence="1">
    <location>
        <begin position="1"/>
        <end position="24"/>
    </location>
</feature>
<feature type="chain" id="PRO_0000017806" description="Phosphatidylcholine-sterol acyltransferase">
    <location>
        <begin position="25"/>
        <end position="440"/>
    </location>
</feature>
<feature type="active site" description="Nucleophile" evidence="1">
    <location>
        <position position="205"/>
    </location>
</feature>
<feature type="active site" description="Charge relay system" evidence="1">
    <location>
        <position position="369"/>
    </location>
</feature>
<feature type="active site" description="Charge relay system" evidence="1">
    <location>
        <position position="401"/>
    </location>
</feature>
<feature type="site" description="Determinant for substrate specificity" evidence="9">
    <location>
        <position position="173"/>
    </location>
</feature>
<feature type="glycosylation site" description="N-linked (GlcNAc...) asparagine" evidence="2">
    <location>
        <position position="44"/>
    </location>
</feature>
<feature type="glycosylation site" description="N-linked (GlcNAc...) asparagine" evidence="2">
    <location>
        <position position="108"/>
    </location>
</feature>
<feature type="glycosylation site" description="N-linked (GlcNAc...) asparagine" evidence="2">
    <location>
        <position position="296"/>
    </location>
</feature>
<feature type="glycosylation site" description="N-linked (GlcNAc...) asparagine" evidence="2">
    <location>
        <position position="397"/>
    </location>
</feature>
<feature type="glycosylation site" description="N-linked (GlcNAc...) asparagine" evidence="2">
    <location>
        <position position="408"/>
    </location>
</feature>
<feature type="disulfide bond" evidence="1">
    <location>
        <begin position="74"/>
        <end position="98"/>
    </location>
</feature>
<feature type="disulfide bond" evidence="1">
    <location>
        <begin position="337"/>
        <end position="380"/>
    </location>
</feature>
<feature type="mutagenesis site" description="Reduced activity with 20-carbon phosphatidylcholine as substrate. Little change with 18-carbon phosphatidylcholine as substrate." evidence="4">
    <original>A</original>
    <variation>E</variation>
    <location>
        <position position="173"/>
    </location>
</feature>
<feature type="sequence conflict" description="In Ref. 1; CAA38030." evidence="8" ref="1">
    <original>H</original>
    <variation>N</variation>
    <location>
        <position position="146"/>
    </location>
</feature>
<feature type="sequence conflict" description="In Ref. 1; CAA38030." evidence="8" ref="1">
    <original>W</original>
    <variation>V</variation>
    <location>
        <position position="383"/>
    </location>
</feature>
<feature type="sequence conflict" description="In Ref. 1; CAA38030." evidence="8" ref="1">
    <original>A</original>
    <variation>G</variation>
    <location>
        <position position="390"/>
    </location>
</feature>
<feature type="sequence conflict" description="In Ref. 1; CAA38030." evidence="8" ref="1">
    <original>P</original>
    <variation>R</variation>
    <location>
        <position position="395"/>
    </location>
</feature>
<feature type="sequence conflict" description="In Ref. 1; CAA38030." evidence="8" ref="1">
    <original>R</original>
    <variation>P</variation>
    <location>
        <position position="423"/>
    </location>
</feature>
<feature type="sequence conflict" description="In Ref. 1; CAA38030." evidence="8" ref="1">
    <original>TK</original>
    <variation>PT</variation>
    <location>
        <begin position="438"/>
        <end position="439"/>
    </location>
</feature>
<protein>
    <recommendedName>
        <fullName>Phosphatidylcholine-sterol acyltransferase</fullName>
        <ecNumber evidence="4 5 6">2.3.1.43</ecNumber>
    </recommendedName>
    <alternativeName>
        <fullName>1-alkyl-2-acetylglycerophosphocholine esterase</fullName>
        <ecNumber evidence="1">3.1.1.47</ecNumber>
    </alternativeName>
    <alternativeName>
        <fullName evidence="7">Lecithin-cholesterol acyltransferase</fullName>
    </alternativeName>
    <alternativeName>
        <fullName>Phospholipid-cholesterol acyltransferase</fullName>
    </alternativeName>
    <alternativeName>
        <fullName evidence="1">Platelet-activating factor acetylhydrolase</fullName>
        <shortName>PAF acetylhydrolase</shortName>
    </alternativeName>
</protein>